<feature type="chain" id="PRO_0000243007" description="Large ribosomal subunit protein uL5">
    <location>
        <begin position="1"/>
        <end position="179"/>
    </location>
</feature>
<keyword id="KW-0687">Ribonucleoprotein</keyword>
<keyword id="KW-0689">Ribosomal protein</keyword>
<keyword id="KW-0694">RNA-binding</keyword>
<keyword id="KW-0699">rRNA-binding</keyword>
<keyword id="KW-0820">tRNA-binding</keyword>
<organism>
    <name type="scientific">Haemophilus influenzae (strain 86-028NP)</name>
    <dbReference type="NCBI Taxonomy" id="281310"/>
    <lineage>
        <taxon>Bacteria</taxon>
        <taxon>Pseudomonadati</taxon>
        <taxon>Pseudomonadota</taxon>
        <taxon>Gammaproteobacteria</taxon>
        <taxon>Pasteurellales</taxon>
        <taxon>Pasteurellaceae</taxon>
        <taxon>Haemophilus</taxon>
    </lineage>
</organism>
<reference key="1">
    <citation type="journal article" date="2005" name="J. Bacteriol.">
        <title>Genomic sequence of an otitis media isolate of nontypeable Haemophilus influenzae: comparative study with H. influenzae serotype d, strain KW20.</title>
        <authorList>
            <person name="Harrison A."/>
            <person name="Dyer D.W."/>
            <person name="Gillaspy A."/>
            <person name="Ray W.C."/>
            <person name="Mungur R."/>
            <person name="Carson M.B."/>
            <person name="Zhong H."/>
            <person name="Gipson J."/>
            <person name="Gipson M."/>
            <person name="Johnson L.S."/>
            <person name="Lewis L."/>
            <person name="Bakaletz L.O."/>
            <person name="Munson R.S. Jr."/>
        </authorList>
    </citation>
    <scope>NUCLEOTIDE SEQUENCE [LARGE SCALE GENOMIC DNA]</scope>
    <source>
        <strain>86-028NP</strain>
    </source>
</reference>
<gene>
    <name evidence="1" type="primary">rplE</name>
    <name type="ordered locus">NTHI0953</name>
</gene>
<proteinExistence type="inferred from homology"/>
<sequence length="179" mass="20311">MAKLHDYYRDQVVSELKNKFGYKSVMQVPRIEKITLNMGVGEALTDKKLLDNAVADLAAISGQKPLVTKARKSVAGFKIRQGYPIGCKVTLRGERMWEFFERLITIAVPRIRDFRGLSAKSFDGRGNYSMGVREQIIFPEIDYDKVDRVRGLDITITTTAKNDEEGQALLAAFNFPFRK</sequence>
<accession>Q4QMA9</accession>
<evidence type="ECO:0000255" key="1">
    <source>
        <dbReference type="HAMAP-Rule" id="MF_01333"/>
    </source>
</evidence>
<evidence type="ECO:0000305" key="2"/>
<protein>
    <recommendedName>
        <fullName evidence="1">Large ribosomal subunit protein uL5</fullName>
    </recommendedName>
    <alternativeName>
        <fullName evidence="2">50S ribosomal protein L5</fullName>
    </alternativeName>
</protein>
<name>RL5_HAEI8</name>
<dbReference type="EMBL" id="CP000057">
    <property type="protein sequence ID" value="AAX87838.1"/>
    <property type="molecule type" value="Genomic_DNA"/>
</dbReference>
<dbReference type="RefSeq" id="WP_005625881.1">
    <property type="nucleotide sequence ID" value="NC_007146.2"/>
</dbReference>
<dbReference type="SMR" id="Q4QMA9"/>
<dbReference type="GeneID" id="93219830"/>
<dbReference type="KEGG" id="hit:NTHI0953"/>
<dbReference type="HOGENOM" id="CLU_061015_2_1_6"/>
<dbReference type="Proteomes" id="UP000002525">
    <property type="component" value="Chromosome"/>
</dbReference>
<dbReference type="GO" id="GO:1990904">
    <property type="term" value="C:ribonucleoprotein complex"/>
    <property type="evidence" value="ECO:0007669"/>
    <property type="project" value="UniProtKB-KW"/>
</dbReference>
<dbReference type="GO" id="GO:0005840">
    <property type="term" value="C:ribosome"/>
    <property type="evidence" value="ECO:0007669"/>
    <property type="project" value="UniProtKB-KW"/>
</dbReference>
<dbReference type="GO" id="GO:0019843">
    <property type="term" value="F:rRNA binding"/>
    <property type="evidence" value="ECO:0007669"/>
    <property type="project" value="UniProtKB-UniRule"/>
</dbReference>
<dbReference type="GO" id="GO:0003735">
    <property type="term" value="F:structural constituent of ribosome"/>
    <property type="evidence" value="ECO:0007669"/>
    <property type="project" value="InterPro"/>
</dbReference>
<dbReference type="GO" id="GO:0000049">
    <property type="term" value="F:tRNA binding"/>
    <property type="evidence" value="ECO:0007669"/>
    <property type="project" value="UniProtKB-UniRule"/>
</dbReference>
<dbReference type="GO" id="GO:0006412">
    <property type="term" value="P:translation"/>
    <property type="evidence" value="ECO:0007669"/>
    <property type="project" value="UniProtKB-UniRule"/>
</dbReference>
<dbReference type="FunFam" id="3.30.1440.10:FF:000001">
    <property type="entry name" value="50S ribosomal protein L5"/>
    <property type="match status" value="1"/>
</dbReference>
<dbReference type="Gene3D" id="3.30.1440.10">
    <property type="match status" value="1"/>
</dbReference>
<dbReference type="HAMAP" id="MF_01333_B">
    <property type="entry name" value="Ribosomal_uL5_B"/>
    <property type="match status" value="1"/>
</dbReference>
<dbReference type="InterPro" id="IPR002132">
    <property type="entry name" value="Ribosomal_uL5"/>
</dbReference>
<dbReference type="InterPro" id="IPR020930">
    <property type="entry name" value="Ribosomal_uL5_bac-type"/>
</dbReference>
<dbReference type="InterPro" id="IPR031309">
    <property type="entry name" value="Ribosomal_uL5_C"/>
</dbReference>
<dbReference type="InterPro" id="IPR020929">
    <property type="entry name" value="Ribosomal_uL5_CS"/>
</dbReference>
<dbReference type="InterPro" id="IPR022803">
    <property type="entry name" value="Ribosomal_uL5_dom_sf"/>
</dbReference>
<dbReference type="InterPro" id="IPR031310">
    <property type="entry name" value="Ribosomal_uL5_N"/>
</dbReference>
<dbReference type="NCBIfam" id="NF000585">
    <property type="entry name" value="PRK00010.1"/>
    <property type="match status" value="1"/>
</dbReference>
<dbReference type="PANTHER" id="PTHR11994">
    <property type="entry name" value="60S RIBOSOMAL PROTEIN L11-RELATED"/>
    <property type="match status" value="1"/>
</dbReference>
<dbReference type="Pfam" id="PF00281">
    <property type="entry name" value="Ribosomal_L5"/>
    <property type="match status" value="1"/>
</dbReference>
<dbReference type="Pfam" id="PF00673">
    <property type="entry name" value="Ribosomal_L5_C"/>
    <property type="match status" value="1"/>
</dbReference>
<dbReference type="PIRSF" id="PIRSF002161">
    <property type="entry name" value="Ribosomal_L5"/>
    <property type="match status" value="1"/>
</dbReference>
<dbReference type="SUPFAM" id="SSF55282">
    <property type="entry name" value="RL5-like"/>
    <property type="match status" value="1"/>
</dbReference>
<dbReference type="PROSITE" id="PS00358">
    <property type="entry name" value="RIBOSOMAL_L5"/>
    <property type="match status" value="1"/>
</dbReference>
<comment type="function">
    <text evidence="1">This is one of the proteins that bind and probably mediate the attachment of the 5S RNA into the large ribosomal subunit, where it forms part of the central protuberance. In the 70S ribosome it contacts protein S13 of the 30S subunit (bridge B1b), connecting the 2 subunits; this bridge is implicated in subunit movement. Contacts the P site tRNA; the 5S rRNA and some of its associated proteins might help stabilize positioning of ribosome-bound tRNAs.</text>
</comment>
<comment type="subunit">
    <text evidence="1">Part of the 50S ribosomal subunit; part of the 5S rRNA/L5/L18/L25 subcomplex. Contacts the 5S rRNA and the P site tRNA. Forms a bridge to the 30S subunit in the 70S ribosome.</text>
</comment>
<comment type="similarity">
    <text evidence="1">Belongs to the universal ribosomal protein uL5 family.</text>
</comment>